<gene>
    <name evidence="1" type="primary">aroA</name>
    <name type="ordered locus">SynRCC307_1150</name>
</gene>
<accession>A5GT44</accession>
<sequence length="437" mass="45289">MGSVCLSGGGSLHGSVRVPGDKSISHRALLFGAIATGTTTIEGLLPAEDPLSTAACLRAMGVTVSAIDSSGVVRVEGVGLDGLQEPAQVLDCGNSGTTMRLMLGLLAGRHGRHFVLDGDGSLRRRPMARVAQPLAQMGAEIGGREGGNKAPLAIAGQTLSGGTIRTPVASAQVKSALLLAGLTAKGSTTVIEPALSRDHSERMLRAFGAELISEPHAAEGPTAIVRPGAELHGQHVVVPGDISSAAFWLIAALVVPGTELTIENVGINPTRTGILDVLEQMGAPLEVLNQRDVAGEPVADLRVRYSPLKAFEIGGELIPRLVDEIPILSVAALCAEGTSVMRDAAELRVKETDRLAVMARQLRAMGAELEETTDGMVIPGGQRLTGAQVDSETDHRVAMSLAVAALIASGDTSIDQSEAAAVSYPSFWDELARLQRS</sequence>
<feature type="chain" id="PRO_0000325390" description="3-phosphoshikimate 1-carboxyvinyltransferase">
    <location>
        <begin position="1"/>
        <end position="437"/>
    </location>
</feature>
<feature type="active site" description="Proton acceptor" evidence="1">
    <location>
        <position position="323"/>
    </location>
</feature>
<feature type="binding site" evidence="1">
    <location>
        <position position="22"/>
    </location>
    <ligand>
        <name>3-phosphoshikimate</name>
        <dbReference type="ChEBI" id="CHEBI:145989"/>
    </ligand>
</feature>
<feature type="binding site" evidence="1">
    <location>
        <position position="22"/>
    </location>
    <ligand>
        <name>phosphoenolpyruvate</name>
        <dbReference type="ChEBI" id="CHEBI:58702"/>
    </ligand>
</feature>
<feature type="binding site" evidence="1">
    <location>
        <position position="23"/>
    </location>
    <ligand>
        <name>3-phosphoshikimate</name>
        <dbReference type="ChEBI" id="CHEBI:145989"/>
    </ligand>
</feature>
<feature type="binding site" evidence="1">
    <location>
        <position position="27"/>
    </location>
    <ligand>
        <name>3-phosphoshikimate</name>
        <dbReference type="ChEBI" id="CHEBI:145989"/>
    </ligand>
</feature>
<feature type="binding site" evidence="1">
    <location>
        <position position="96"/>
    </location>
    <ligand>
        <name>phosphoenolpyruvate</name>
        <dbReference type="ChEBI" id="CHEBI:58702"/>
    </ligand>
</feature>
<feature type="binding site" evidence="1">
    <location>
        <position position="125"/>
    </location>
    <ligand>
        <name>phosphoenolpyruvate</name>
        <dbReference type="ChEBI" id="CHEBI:58702"/>
    </ligand>
</feature>
<feature type="binding site" evidence="1">
    <location>
        <position position="170"/>
    </location>
    <ligand>
        <name>3-phosphoshikimate</name>
        <dbReference type="ChEBI" id="CHEBI:145989"/>
    </ligand>
</feature>
<feature type="binding site" evidence="1">
    <location>
        <position position="172"/>
    </location>
    <ligand>
        <name>3-phosphoshikimate</name>
        <dbReference type="ChEBI" id="CHEBI:145989"/>
    </ligand>
</feature>
<feature type="binding site" evidence="1">
    <location>
        <position position="172"/>
    </location>
    <ligand>
        <name>phosphoenolpyruvate</name>
        <dbReference type="ChEBI" id="CHEBI:58702"/>
    </ligand>
</feature>
<feature type="binding site" evidence="1">
    <location>
        <position position="323"/>
    </location>
    <ligand>
        <name>3-phosphoshikimate</name>
        <dbReference type="ChEBI" id="CHEBI:145989"/>
    </ligand>
</feature>
<feature type="binding site" evidence="1">
    <location>
        <position position="350"/>
    </location>
    <ligand>
        <name>3-phosphoshikimate</name>
        <dbReference type="ChEBI" id="CHEBI:145989"/>
    </ligand>
</feature>
<feature type="binding site" evidence="1">
    <location>
        <position position="354"/>
    </location>
    <ligand>
        <name>phosphoenolpyruvate</name>
        <dbReference type="ChEBI" id="CHEBI:58702"/>
    </ligand>
</feature>
<feature type="binding site" evidence="1">
    <location>
        <position position="396"/>
    </location>
    <ligand>
        <name>phosphoenolpyruvate</name>
        <dbReference type="ChEBI" id="CHEBI:58702"/>
    </ligand>
</feature>
<reference key="1">
    <citation type="submission" date="2006-05" db="EMBL/GenBank/DDBJ databases">
        <authorList>
            <consortium name="Genoscope"/>
        </authorList>
    </citation>
    <scope>NUCLEOTIDE SEQUENCE [LARGE SCALE GENOMIC DNA]</scope>
    <source>
        <strain>RCC307</strain>
    </source>
</reference>
<name>AROA_SYNR3</name>
<dbReference type="EC" id="2.5.1.19" evidence="1"/>
<dbReference type="EMBL" id="CT978603">
    <property type="protein sequence ID" value="CAK28053.1"/>
    <property type="molecule type" value="Genomic_DNA"/>
</dbReference>
<dbReference type="SMR" id="A5GT44"/>
<dbReference type="STRING" id="316278.SynRCC307_1150"/>
<dbReference type="KEGG" id="syr:SynRCC307_1150"/>
<dbReference type="eggNOG" id="COG0128">
    <property type="taxonomic scope" value="Bacteria"/>
</dbReference>
<dbReference type="HOGENOM" id="CLU_024321_0_1_3"/>
<dbReference type="OrthoDB" id="9809920at2"/>
<dbReference type="UniPathway" id="UPA00053">
    <property type="reaction ID" value="UER00089"/>
</dbReference>
<dbReference type="Proteomes" id="UP000001115">
    <property type="component" value="Chromosome"/>
</dbReference>
<dbReference type="GO" id="GO:0005737">
    <property type="term" value="C:cytoplasm"/>
    <property type="evidence" value="ECO:0007669"/>
    <property type="project" value="UniProtKB-SubCell"/>
</dbReference>
<dbReference type="GO" id="GO:0003866">
    <property type="term" value="F:3-phosphoshikimate 1-carboxyvinyltransferase activity"/>
    <property type="evidence" value="ECO:0007669"/>
    <property type="project" value="UniProtKB-UniRule"/>
</dbReference>
<dbReference type="GO" id="GO:0008652">
    <property type="term" value="P:amino acid biosynthetic process"/>
    <property type="evidence" value="ECO:0007669"/>
    <property type="project" value="UniProtKB-KW"/>
</dbReference>
<dbReference type="GO" id="GO:0009073">
    <property type="term" value="P:aromatic amino acid family biosynthetic process"/>
    <property type="evidence" value="ECO:0007669"/>
    <property type="project" value="UniProtKB-KW"/>
</dbReference>
<dbReference type="GO" id="GO:0009423">
    <property type="term" value="P:chorismate biosynthetic process"/>
    <property type="evidence" value="ECO:0007669"/>
    <property type="project" value="UniProtKB-UniRule"/>
</dbReference>
<dbReference type="CDD" id="cd01556">
    <property type="entry name" value="EPSP_synthase"/>
    <property type="match status" value="1"/>
</dbReference>
<dbReference type="FunFam" id="3.65.10.10:FF:000005">
    <property type="entry name" value="3-phosphoshikimate 1-carboxyvinyltransferase"/>
    <property type="match status" value="1"/>
</dbReference>
<dbReference type="FunFam" id="3.65.10.10:FF:000006">
    <property type="entry name" value="3-phosphoshikimate 1-carboxyvinyltransferase"/>
    <property type="match status" value="1"/>
</dbReference>
<dbReference type="Gene3D" id="3.65.10.10">
    <property type="entry name" value="Enolpyruvate transferase domain"/>
    <property type="match status" value="2"/>
</dbReference>
<dbReference type="HAMAP" id="MF_00210">
    <property type="entry name" value="EPSP_synth"/>
    <property type="match status" value="1"/>
</dbReference>
<dbReference type="InterPro" id="IPR001986">
    <property type="entry name" value="Enolpyruvate_Tfrase_dom"/>
</dbReference>
<dbReference type="InterPro" id="IPR036968">
    <property type="entry name" value="Enolpyruvate_Tfrase_sf"/>
</dbReference>
<dbReference type="InterPro" id="IPR006264">
    <property type="entry name" value="EPSP_synthase"/>
</dbReference>
<dbReference type="InterPro" id="IPR023193">
    <property type="entry name" value="EPSP_synthase_CS"/>
</dbReference>
<dbReference type="InterPro" id="IPR013792">
    <property type="entry name" value="RNA3'P_cycl/enolpyr_Trfase_a/b"/>
</dbReference>
<dbReference type="NCBIfam" id="TIGR01356">
    <property type="entry name" value="aroA"/>
    <property type="match status" value="1"/>
</dbReference>
<dbReference type="PANTHER" id="PTHR21090">
    <property type="entry name" value="AROM/DEHYDROQUINATE SYNTHASE"/>
    <property type="match status" value="1"/>
</dbReference>
<dbReference type="PANTHER" id="PTHR21090:SF5">
    <property type="entry name" value="PENTAFUNCTIONAL AROM POLYPEPTIDE"/>
    <property type="match status" value="1"/>
</dbReference>
<dbReference type="Pfam" id="PF00275">
    <property type="entry name" value="EPSP_synthase"/>
    <property type="match status" value="1"/>
</dbReference>
<dbReference type="PIRSF" id="PIRSF000505">
    <property type="entry name" value="EPSPS"/>
    <property type="match status" value="1"/>
</dbReference>
<dbReference type="SUPFAM" id="SSF55205">
    <property type="entry name" value="EPT/RTPC-like"/>
    <property type="match status" value="1"/>
</dbReference>
<dbReference type="PROSITE" id="PS00104">
    <property type="entry name" value="EPSP_SYNTHASE_1"/>
    <property type="match status" value="1"/>
</dbReference>
<dbReference type="PROSITE" id="PS00885">
    <property type="entry name" value="EPSP_SYNTHASE_2"/>
    <property type="match status" value="1"/>
</dbReference>
<evidence type="ECO:0000255" key="1">
    <source>
        <dbReference type="HAMAP-Rule" id="MF_00210"/>
    </source>
</evidence>
<proteinExistence type="inferred from homology"/>
<protein>
    <recommendedName>
        <fullName evidence="1">3-phosphoshikimate 1-carboxyvinyltransferase</fullName>
        <ecNumber evidence="1">2.5.1.19</ecNumber>
    </recommendedName>
    <alternativeName>
        <fullName evidence="1">5-enolpyruvylshikimate-3-phosphate synthase</fullName>
        <shortName evidence="1">EPSP synthase</shortName>
        <shortName evidence="1">EPSPS</shortName>
    </alternativeName>
</protein>
<comment type="function">
    <text evidence="1">Catalyzes the transfer of the enolpyruvyl moiety of phosphoenolpyruvate (PEP) to the 5-hydroxyl of shikimate-3-phosphate (S3P) to produce enolpyruvyl shikimate-3-phosphate and inorganic phosphate.</text>
</comment>
<comment type="catalytic activity">
    <reaction evidence="1">
        <text>3-phosphoshikimate + phosphoenolpyruvate = 5-O-(1-carboxyvinyl)-3-phosphoshikimate + phosphate</text>
        <dbReference type="Rhea" id="RHEA:21256"/>
        <dbReference type="ChEBI" id="CHEBI:43474"/>
        <dbReference type="ChEBI" id="CHEBI:57701"/>
        <dbReference type="ChEBI" id="CHEBI:58702"/>
        <dbReference type="ChEBI" id="CHEBI:145989"/>
        <dbReference type="EC" id="2.5.1.19"/>
    </reaction>
    <physiologicalReaction direction="left-to-right" evidence="1">
        <dbReference type="Rhea" id="RHEA:21257"/>
    </physiologicalReaction>
</comment>
<comment type="pathway">
    <text evidence="1">Metabolic intermediate biosynthesis; chorismate biosynthesis; chorismate from D-erythrose 4-phosphate and phosphoenolpyruvate: step 6/7.</text>
</comment>
<comment type="subunit">
    <text evidence="1">Monomer.</text>
</comment>
<comment type="subcellular location">
    <subcellularLocation>
        <location evidence="1">Cytoplasm</location>
    </subcellularLocation>
</comment>
<comment type="similarity">
    <text evidence="1">Belongs to the EPSP synthase family.</text>
</comment>
<keyword id="KW-0028">Amino-acid biosynthesis</keyword>
<keyword id="KW-0057">Aromatic amino acid biosynthesis</keyword>
<keyword id="KW-0963">Cytoplasm</keyword>
<keyword id="KW-1185">Reference proteome</keyword>
<keyword id="KW-0808">Transferase</keyword>
<organism>
    <name type="scientific">Synechococcus sp. (strain RCC307)</name>
    <dbReference type="NCBI Taxonomy" id="316278"/>
    <lineage>
        <taxon>Bacteria</taxon>
        <taxon>Bacillati</taxon>
        <taxon>Cyanobacteriota</taxon>
        <taxon>Cyanophyceae</taxon>
        <taxon>Synechococcales</taxon>
        <taxon>Synechococcaceae</taxon>
        <taxon>Synechococcus</taxon>
    </lineage>
</organism>